<gene>
    <name type="ordered locus">SAR0816</name>
</gene>
<reference key="1">
    <citation type="journal article" date="2004" name="Proc. Natl. Acad. Sci. U.S.A.">
        <title>Complete genomes of two clinical Staphylococcus aureus strains: evidence for the rapid evolution of virulence and drug resistance.</title>
        <authorList>
            <person name="Holden M.T.G."/>
            <person name="Feil E.J."/>
            <person name="Lindsay J.A."/>
            <person name="Peacock S.J."/>
            <person name="Day N.P.J."/>
            <person name="Enright M.C."/>
            <person name="Foster T.J."/>
            <person name="Moore C.E."/>
            <person name="Hurst L."/>
            <person name="Atkin R."/>
            <person name="Barron A."/>
            <person name="Bason N."/>
            <person name="Bentley S.D."/>
            <person name="Chillingworth C."/>
            <person name="Chillingworth T."/>
            <person name="Churcher C."/>
            <person name="Clark L."/>
            <person name="Corton C."/>
            <person name="Cronin A."/>
            <person name="Doggett J."/>
            <person name="Dowd L."/>
            <person name="Feltwell T."/>
            <person name="Hance Z."/>
            <person name="Harris B."/>
            <person name="Hauser H."/>
            <person name="Holroyd S."/>
            <person name="Jagels K."/>
            <person name="James K.D."/>
            <person name="Lennard N."/>
            <person name="Line A."/>
            <person name="Mayes R."/>
            <person name="Moule S."/>
            <person name="Mungall K."/>
            <person name="Ormond D."/>
            <person name="Quail M.A."/>
            <person name="Rabbinowitsch E."/>
            <person name="Rutherford K.M."/>
            <person name="Sanders M."/>
            <person name="Sharp S."/>
            <person name="Simmonds M."/>
            <person name="Stevens K."/>
            <person name="Whitehead S."/>
            <person name="Barrell B.G."/>
            <person name="Spratt B.G."/>
            <person name="Parkhill J."/>
        </authorList>
    </citation>
    <scope>NUCLEOTIDE SEQUENCE [LARGE SCALE GENOMIC DNA]</scope>
    <source>
        <strain>MRSA252</strain>
    </source>
</reference>
<comment type="similarity">
    <text evidence="1">Belongs to the transferase hexapeptide repeat family.</text>
</comment>
<dbReference type="EC" id="2.3.1.-"/>
<dbReference type="EMBL" id="BX571856">
    <property type="protein sequence ID" value="CAG39826.1"/>
    <property type="molecule type" value="Genomic_DNA"/>
</dbReference>
<dbReference type="RefSeq" id="WP_001224791.1">
    <property type="nucleotide sequence ID" value="NC_002952.2"/>
</dbReference>
<dbReference type="SMR" id="Q6GIM9"/>
<dbReference type="KEGG" id="sar:SAR0816"/>
<dbReference type="HOGENOM" id="CLU_051638_16_1_9"/>
<dbReference type="Proteomes" id="UP000000596">
    <property type="component" value="Chromosome"/>
</dbReference>
<dbReference type="GO" id="GO:0016746">
    <property type="term" value="F:acyltransferase activity"/>
    <property type="evidence" value="ECO:0007669"/>
    <property type="project" value="UniProtKB-KW"/>
</dbReference>
<dbReference type="Gene3D" id="2.160.10.10">
    <property type="entry name" value="Hexapeptide repeat proteins"/>
    <property type="match status" value="1"/>
</dbReference>
<dbReference type="InterPro" id="IPR001451">
    <property type="entry name" value="Hexapep"/>
</dbReference>
<dbReference type="InterPro" id="IPR018357">
    <property type="entry name" value="Hexapep_transf_CS"/>
</dbReference>
<dbReference type="InterPro" id="IPR051159">
    <property type="entry name" value="Hexapeptide_acetyltransf"/>
</dbReference>
<dbReference type="InterPro" id="IPR011004">
    <property type="entry name" value="Trimer_LpxA-like_sf"/>
</dbReference>
<dbReference type="PANTHER" id="PTHR23416">
    <property type="entry name" value="SIALIC ACID SYNTHASE-RELATED"/>
    <property type="match status" value="1"/>
</dbReference>
<dbReference type="Pfam" id="PF14602">
    <property type="entry name" value="Hexapep_2"/>
    <property type="match status" value="1"/>
</dbReference>
<dbReference type="SUPFAM" id="SSF51161">
    <property type="entry name" value="Trimeric LpxA-like enzymes"/>
    <property type="match status" value="1"/>
</dbReference>
<dbReference type="PROSITE" id="PS00101">
    <property type="entry name" value="HEXAPEP_TRANSFERASES"/>
    <property type="match status" value="1"/>
</dbReference>
<feature type="chain" id="PRO_0000068748" description="Putative acetyltransferase SAR0816">
    <location>
        <begin position="1"/>
        <end position="161"/>
    </location>
</feature>
<evidence type="ECO:0000305" key="1"/>
<organism>
    <name type="scientific">Staphylococcus aureus (strain MRSA252)</name>
    <dbReference type="NCBI Taxonomy" id="282458"/>
    <lineage>
        <taxon>Bacteria</taxon>
        <taxon>Bacillati</taxon>
        <taxon>Bacillota</taxon>
        <taxon>Bacilli</taxon>
        <taxon>Bacillales</taxon>
        <taxon>Staphylococcaceae</taxon>
        <taxon>Staphylococcus</taxon>
    </lineage>
</organism>
<keyword id="KW-0012">Acyltransferase</keyword>
<keyword id="KW-0677">Repeat</keyword>
<keyword id="KW-0808">Transferase</keyword>
<accession>Q6GIM9</accession>
<protein>
    <recommendedName>
        <fullName>Putative acetyltransferase SAR0816</fullName>
        <ecNumber>2.3.1.-</ecNumber>
    </recommendedName>
</protein>
<name>ATRF1_STAAR</name>
<proteinExistence type="inferred from homology"/>
<sequence length="161" mass="18240">MRKFLSKEYHRTNPLWHVYRLVKFSKVFKNVIIIEFSKFIPSMVLKRHIYKQILNINIGNQSSIAYKVMLDIFYPELITIGSNSVIGYNVTILTHEALVDEFRYGPVTIGSNTLIGANATILPGITIGDNVKVAAGTVVSKDIPDNGFAYGNPMYIKMIRR</sequence>